<organism>
    <name type="scientific">Salmonella typhimurium (strain LT2 / SGSC1412 / ATCC 700720)</name>
    <dbReference type="NCBI Taxonomy" id="99287"/>
    <lineage>
        <taxon>Bacteria</taxon>
        <taxon>Pseudomonadati</taxon>
        <taxon>Pseudomonadota</taxon>
        <taxon>Gammaproteobacteria</taxon>
        <taxon>Enterobacterales</taxon>
        <taxon>Enterobacteriaceae</taxon>
        <taxon>Salmonella</taxon>
    </lineage>
</organism>
<sequence>MSEFVTVARPYAKAAFDFAVEHQSVERWQDMLAFAAEVTKNEQMAELLSGALAPETLAESFIAVCGEQLDENGQNLIRVMAENNRLNALPDVLEQFIHLRAASEATSEVEVTSATALSEEQLSKISAAMEKRLSRKVKLNCKIDKSVMAGVIIRAGDMVIDGSVRGRLERLADVLQS</sequence>
<accession>Q7CPE5</accession>
<proteinExistence type="inferred from homology"/>
<comment type="function">
    <text evidence="1">F(1)F(0) ATP synthase produces ATP from ADP in the presence of a proton or sodium gradient. F-type ATPases consist of two structural domains, F(1) containing the extramembraneous catalytic core and F(0) containing the membrane proton channel, linked together by a central stalk and a peripheral stalk. During catalysis, ATP synthesis in the catalytic domain of F(1) is coupled via a rotary mechanism of the central stalk subunits to proton translocation.</text>
</comment>
<comment type="function">
    <text evidence="1">This protein is part of the stalk that links CF(0) to CF(1). It either transmits conformational changes from CF(0) to CF(1) or is implicated in proton conduction.</text>
</comment>
<comment type="subunit">
    <text evidence="1">F-type ATPases have 2 components, F(1) - the catalytic core - and F(0) - the membrane proton channel. F(1) has five subunits: alpha(3), beta(3), gamma(1), delta(1), epsilon(1). F(0) has three main subunits: a(1), b(2) and c(10-14). The alpha and beta chains form an alternating ring which encloses part of the gamma chain. F(1) is attached to F(0) by a central stalk formed by the gamma and epsilon chains, while a peripheral stalk is formed by the delta and b chains.</text>
</comment>
<comment type="subcellular location">
    <subcellularLocation>
        <location evidence="1">Cell inner membrane</location>
        <topology evidence="1">Peripheral membrane protein</topology>
    </subcellularLocation>
</comment>
<comment type="similarity">
    <text evidence="1">Belongs to the ATPase delta chain family.</text>
</comment>
<evidence type="ECO:0000255" key="1">
    <source>
        <dbReference type="HAMAP-Rule" id="MF_01416"/>
    </source>
</evidence>
<feature type="chain" id="PRO_0000371124" description="ATP synthase subunit delta">
    <location>
        <begin position="1"/>
        <end position="177"/>
    </location>
</feature>
<gene>
    <name evidence="1" type="primary">atpH</name>
    <name type="ordered locus">STM3868</name>
</gene>
<reference key="1">
    <citation type="journal article" date="2001" name="Nature">
        <title>Complete genome sequence of Salmonella enterica serovar Typhimurium LT2.</title>
        <authorList>
            <person name="McClelland M."/>
            <person name="Sanderson K.E."/>
            <person name="Spieth J."/>
            <person name="Clifton S.W."/>
            <person name="Latreille P."/>
            <person name="Courtney L."/>
            <person name="Porwollik S."/>
            <person name="Ali J."/>
            <person name="Dante M."/>
            <person name="Du F."/>
            <person name="Hou S."/>
            <person name="Layman D."/>
            <person name="Leonard S."/>
            <person name="Nguyen C."/>
            <person name="Scott K."/>
            <person name="Holmes A."/>
            <person name="Grewal N."/>
            <person name="Mulvaney E."/>
            <person name="Ryan E."/>
            <person name="Sun H."/>
            <person name="Florea L."/>
            <person name="Miller W."/>
            <person name="Stoneking T."/>
            <person name="Nhan M."/>
            <person name="Waterston R."/>
            <person name="Wilson R.K."/>
        </authorList>
    </citation>
    <scope>NUCLEOTIDE SEQUENCE [LARGE SCALE GENOMIC DNA]</scope>
    <source>
        <strain>LT2 / SGSC1412 / ATCC 700720</strain>
    </source>
</reference>
<name>ATPD_SALTY</name>
<keyword id="KW-0066">ATP synthesis</keyword>
<keyword id="KW-0997">Cell inner membrane</keyword>
<keyword id="KW-1003">Cell membrane</keyword>
<keyword id="KW-0139">CF(1)</keyword>
<keyword id="KW-0375">Hydrogen ion transport</keyword>
<keyword id="KW-0406">Ion transport</keyword>
<keyword id="KW-0472">Membrane</keyword>
<keyword id="KW-1185">Reference proteome</keyword>
<keyword id="KW-0813">Transport</keyword>
<dbReference type="EMBL" id="AE006468">
    <property type="protein sequence ID" value="AAL22726.1"/>
    <property type="molecule type" value="Genomic_DNA"/>
</dbReference>
<dbReference type="RefSeq" id="NP_462767.1">
    <property type="nucleotide sequence ID" value="NC_003197.2"/>
</dbReference>
<dbReference type="RefSeq" id="WP_001288957.1">
    <property type="nucleotide sequence ID" value="NC_003197.2"/>
</dbReference>
<dbReference type="SMR" id="Q7CPE5"/>
<dbReference type="STRING" id="99287.STM3868"/>
<dbReference type="PaxDb" id="99287-STM3868"/>
<dbReference type="GeneID" id="1255395"/>
<dbReference type="KEGG" id="stm:STM3868"/>
<dbReference type="PATRIC" id="fig|99287.12.peg.4097"/>
<dbReference type="HOGENOM" id="CLU_085114_3_0_6"/>
<dbReference type="OMA" id="MVDNIQD"/>
<dbReference type="PhylomeDB" id="Q7CPE5"/>
<dbReference type="BioCyc" id="SENT99287:STM3868-MONOMER"/>
<dbReference type="Proteomes" id="UP000001014">
    <property type="component" value="Chromosome"/>
</dbReference>
<dbReference type="GO" id="GO:0005886">
    <property type="term" value="C:plasma membrane"/>
    <property type="evidence" value="ECO:0007669"/>
    <property type="project" value="UniProtKB-SubCell"/>
</dbReference>
<dbReference type="GO" id="GO:0045259">
    <property type="term" value="C:proton-transporting ATP synthase complex"/>
    <property type="evidence" value="ECO:0007669"/>
    <property type="project" value="UniProtKB-KW"/>
</dbReference>
<dbReference type="GO" id="GO:0046933">
    <property type="term" value="F:proton-transporting ATP synthase activity, rotational mechanism"/>
    <property type="evidence" value="ECO:0007669"/>
    <property type="project" value="UniProtKB-UniRule"/>
</dbReference>
<dbReference type="GO" id="GO:0015986">
    <property type="term" value="P:proton motive force-driven ATP synthesis"/>
    <property type="evidence" value="ECO:0000318"/>
    <property type="project" value="GO_Central"/>
</dbReference>
<dbReference type="FunFam" id="1.10.520.20:FF:000001">
    <property type="entry name" value="ATP synthase subunit delta"/>
    <property type="match status" value="1"/>
</dbReference>
<dbReference type="Gene3D" id="1.10.520.20">
    <property type="entry name" value="N-terminal domain of the delta subunit of the F1F0-ATP synthase"/>
    <property type="match status" value="1"/>
</dbReference>
<dbReference type="HAMAP" id="MF_01416">
    <property type="entry name" value="ATP_synth_delta_bact"/>
    <property type="match status" value="1"/>
</dbReference>
<dbReference type="InterPro" id="IPR026015">
    <property type="entry name" value="ATP_synth_OSCP/delta_N_sf"/>
</dbReference>
<dbReference type="InterPro" id="IPR020781">
    <property type="entry name" value="ATPase_OSCP/d_CS"/>
</dbReference>
<dbReference type="InterPro" id="IPR000711">
    <property type="entry name" value="ATPase_OSCP/dsu"/>
</dbReference>
<dbReference type="NCBIfam" id="TIGR01145">
    <property type="entry name" value="ATP_synt_delta"/>
    <property type="match status" value="1"/>
</dbReference>
<dbReference type="NCBIfam" id="NF004402">
    <property type="entry name" value="PRK05758.2-2"/>
    <property type="match status" value="1"/>
</dbReference>
<dbReference type="NCBIfam" id="NF004404">
    <property type="entry name" value="PRK05758.2-5"/>
    <property type="match status" value="1"/>
</dbReference>
<dbReference type="PANTHER" id="PTHR11910">
    <property type="entry name" value="ATP SYNTHASE DELTA CHAIN"/>
    <property type="match status" value="1"/>
</dbReference>
<dbReference type="Pfam" id="PF00213">
    <property type="entry name" value="OSCP"/>
    <property type="match status" value="1"/>
</dbReference>
<dbReference type="PRINTS" id="PR00125">
    <property type="entry name" value="ATPASEDELTA"/>
</dbReference>
<dbReference type="SUPFAM" id="SSF47928">
    <property type="entry name" value="N-terminal domain of the delta subunit of the F1F0-ATP synthase"/>
    <property type="match status" value="1"/>
</dbReference>
<dbReference type="PROSITE" id="PS00389">
    <property type="entry name" value="ATPASE_DELTA"/>
    <property type="match status" value="1"/>
</dbReference>
<protein>
    <recommendedName>
        <fullName evidence="1">ATP synthase subunit delta</fullName>
    </recommendedName>
    <alternativeName>
        <fullName evidence="1">ATP synthase F(1) sector subunit delta</fullName>
    </alternativeName>
    <alternativeName>
        <fullName evidence="1">F-type ATPase subunit delta</fullName>
        <shortName evidence="1">F-ATPase subunit delta</shortName>
    </alternativeName>
</protein>